<proteinExistence type="inferred from homology"/>
<accession>Q1LTC2</accession>
<feature type="chain" id="PRO_0000251288" description="Large ribosomal subunit protein uL18">
    <location>
        <begin position="1"/>
        <end position="115"/>
    </location>
</feature>
<protein>
    <recommendedName>
        <fullName evidence="1">Large ribosomal subunit protein uL18</fullName>
    </recommendedName>
    <alternativeName>
        <fullName evidence="2">50S ribosomal protein L18</fullName>
    </alternativeName>
</protein>
<evidence type="ECO:0000255" key="1">
    <source>
        <dbReference type="HAMAP-Rule" id="MF_01337"/>
    </source>
</evidence>
<evidence type="ECO:0000305" key="2"/>
<name>RL18_BAUCH</name>
<comment type="function">
    <text evidence="1">This is one of the proteins that bind and probably mediate the attachment of the 5S RNA into the large ribosomal subunit, where it forms part of the central protuberance.</text>
</comment>
<comment type="subunit">
    <text evidence="1">Part of the 50S ribosomal subunit; part of the 5S rRNA/L5/L18/L25 subcomplex. Contacts the 5S and 23S rRNAs.</text>
</comment>
<comment type="similarity">
    <text evidence="1">Belongs to the universal ribosomal protein uL18 family.</text>
</comment>
<sequence length="115" mass="12806">MDKKKARLRRAASTRHKLQNSTRLVVHRTIRHIYAQIIAPHNSKVLIAASTVEKMIANQLKNTGNKEAAVAVGKKIAERALAQGIYNVSFDRSGYQYHGRVQALAEAAREVGLNF</sequence>
<keyword id="KW-1185">Reference proteome</keyword>
<keyword id="KW-0687">Ribonucleoprotein</keyword>
<keyword id="KW-0689">Ribosomal protein</keyword>
<keyword id="KW-0694">RNA-binding</keyword>
<keyword id="KW-0699">rRNA-binding</keyword>
<reference key="1">
    <citation type="journal article" date="2006" name="PLoS Biol.">
        <title>Metabolic complementarity and genomics of the dual bacterial symbiosis of sharpshooters.</title>
        <authorList>
            <person name="Wu D."/>
            <person name="Daugherty S.C."/>
            <person name="Van Aken S.E."/>
            <person name="Pai G.H."/>
            <person name="Watkins K.L."/>
            <person name="Khouri H."/>
            <person name="Tallon L.J."/>
            <person name="Zaborsky J.M."/>
            <person name="Dunbar H.E."/>
            <person name="Tran P.L."/>
            <person name="Moran N.A."/>
            <person name="Eisen J.A."/>
        </authorList>
    </citation>
    <scope>NUCLEOTIDE SEQUENCE [LARGE SCALE GENOMIC DNA]</scope>
</reference>
<gene>
    <name evidence="1" type="primary">rplR</name>
    <name type="ordered locus">BCI_0344</name>
</gene>
<dbReference type="EMBL" id="CP000238">
    <property type="protein sequence ID" value="ABF14177.1"/>
    <property type="molecule type" value="Genomic_DNA"/>
</dbReference>
<dbReference type="RefSeq" id="WP_011520525.1">
    <property type="nucleotide sequence ID" value="NC_007984.1"/>
</dbReference>
<dbReference type="SMR" id="Q1LTC2"/>
<dbReference type="STRING" id="374463.BCI_0344"/>
<dbReference type="KEGG" id="bci:BCI_0344"/>
<dbReference type="HOGENOM" id="CLU_098841_0_1_6"/>
<dbReference type="OrthoDB" id="9810939at2"/>
<dbReference type="Proteomes" id="UP000002427">
    <property type="component" value="Chromosome"/>
</dbReference>
<dbReference type="GO" id="GO:0022625">
    <property type="term" value="C:cytosolic large ribosomal subunit"/>
    <property type="evidence" value="ECO:0007669"/>
    <property type="project" value="TreeGrafter"/>
</dbReference>
<dbReference type="GO" id="GO:0008097">
    <property type="term" value="F:5S rRNA binding"/>
    <property type="evidence" value="ECO:0007669"/>
    <property type="project" value="TreeGrafter"/>
</dbReference>
<dbReference type="GO" id="GO:0003735">
    <property type="term" value="F:structural constituent of ribosome"/>
    <property type="evidence" value="ECO:0007669"/>
    <property type="project" value="InterPro"/>
</dbReference>
<dbReference type="GO" id="GO:0006412">
    <property type="term" value="P:translation"/>
    <property type="evidence" value="ECO:0007669"/>
    <property type="project" value="UniProtKB-UniRule"/>
</dbReference>
<dbReference type="CDD" id="cd00432">
    <property type="entry name" value="Ribosomal_L18_L5e"/>
    <property type="match status" value="1"/>
</dbReference>
<dbReference type="FunFam" id="3.30.420.100:FF:000001">
    <property type="entry name" value="50S ribosomal protein L18"/>
    <property type="match status" value="1"/>
</dbReference>
<dbReference type="Gene3D" id="3.30.420.100">
    <property type="match status" value="1"/>
</dbReference>
<dbReference type="HAMAP" id="MF_01337_B">
    <property type="entry name" value="Ribosomal_uL18_B"/>
    <property type="match status" value="1"/>
</dbReference>
<dbReference type="InterPro" id="IPR004389">
    <property type="entry name" value="Ribosomal_uL18_bac-type"/>
</dbReference>
<dbReference type="InterPro" id="IPR005484">
    <property type="entry name" value="Ribosomal_uL18_bac/euk"/>
</dbReference>
<dbReference type="NCBIfam" id="TIGR00060">
    <property type="entry name" value="L18_bact"/>
    <property type="match status" value="1"/>
</dbReference>
<dbReference type="PANTHER" id="PTHR12899">
    <property type="entry name" value="39S RIBOSOMAL PROTEIN L18, MITOCHONDRIAL"/>
    <property type="match status" value="1"/>
</dbReference>
<dbReference type="PANTHER" id="PTHR12899:SF3">
    <property type="entry name" value="LARGE RIBOSOMAL SUBUNIT PROTEIN UL18M"/>
    <property type="match status" value="1"/>
</dbReference>
<dbReference type="Pfam" id="PF00861">
    <property type="entry name" value="Ribosomal_L18p"/>
    <property type="match status" value="1"/>
</dbReference>
<dbReference type="SUPFAM" id="SSF53137">
    <property type="entry name" value="Translational machinery components"/>
    <property type="match status" value="1"/>
</dbReference>
<organism>
    <name type="scientific">Baumannia cicadellinicola subsp. Homalodisca coagulata</name>
    <dbReference type="NCBI Taxonomy" id="374463"/>
    <lineage>
        <taxon>Bacteria</taxon>
        <taxon>Pseudomonadati</taxon>
        <taxon>Pseudomonadota</taxon>
        <taxon>Gammaproteobacteria</taxon>
        <taxon>Candidatus Palibaumannia</taxon>
    </lineage>
</organism>